<accession>C7GPS8</accession>
<evidence type="ECO:0000250" key="1"/>
<evidence type="ECO:0000256" key="2">
    <source>
        <dbReference type="SAM" id="MobiDB-lite"/>
    </source>
</evidence>
<evidence type="ECO:0000305" key="3"/>
<keyword id="KW-0156">Chromatin regulator</keyword>
<keyword id="KW-0539">Nucleus</keyword>
<keyword id="KW-0677">Repeat</keyword>
<keyword id="KW-0853">WD repeat</keyword>
<comment type="function">
    <text evidence="1">Component of the ASTRA complex involved in chromatin remodeling.</text>
</comment>
<comment type="subunit">
    <text evidence="1">Component of the ASTRA chromatin remodeling machinery complex composed of at least RVB1, RVB2, TRA1, TEL2, TTI1 and TTI2.</text>
</comment>
<comment type="subcellular location">
    <subcellularLocation>
        <location evidence="1">Nucleus</location>
    </subcellularLocation>
</comment>
<comment type="similarity">
    <text evidence="3">Belongs to the WD repeat ASA1 family.</text>
</comment>
<proteinExistence type="inferred from homology"/>
<protein>
    <recommendedName>
        <fullName>ASTRA-associated protein 1</fullName>
    </recommendedName>
</protein>
<dbReference type="EMBL" id="ACFL01000094">
    <property type="protein sequence ID" value="EEU07195.1"/>
    <property type="molecule type" value="Genomic_DNA"/>
</dbReference>
<dbReference type="OrthoDB" id="4569at4893"/>
<dbReference type="Proteomes" id="UP000008073">
    <property type="component" value="Unassembled WGS sequence"/>
</dbReference>
<dbReference type="GO" id="GO:0005634">
    <property type="term" value="C:nucleus"/>
    <property type="evidence" value="ECO:0007669"/>
    <property type="project" value="UniProtKB-SubCell"/>
</dbReference>
<dbReference type="GO" id="GO:0006325">
    <property type="term" value="P:chromatin organization"/>
    <property type="evidence" value="ECO:0007669"/>
    <property type="project" value="UniProtKB-KW"/>
</dbReference>
<dbReference type="Gene3D" id="2.130.10.10">
    <property type="entry name" value="YVTN repeat-like/Quinoprotein amine dehydrogenase"/>
    <property type="match status" value="1"/>
</dbReference>
<dbReference type="InterPro" id="IPR015943">
    <property type="entry name" value="WD40/YVTN_repeat-like_dom_sf"/>
</dbReference>
<dbReference type="InterPro" id="IPR036322">
    <property type="entry name" value="WD40_repeat_dom_sf"/>
</dbReference>
<dbReference type="PANTHER" id="PTHR19854:SF1">
    <property type="entry name" value="GUANINE NUCLEOTIDE-BINDING PROTEIN SUBUNIT BETA-LIKE PROTEIN 1"/>
    <property type="match status" value="1"/>
</dbReference>
<dbReference type="PANTHER" id="PTHR19854">
    <property type="entry name" value="TRANSDUCIN BETA-LIKE 3"/>
    <property type="match status" value="1"/>
</dbReference>
<dbReference type="SUPFAM" id="SSF50978">
    <property type="entry name" value="WD40 repeat-like"/>
    <property type="match status" value="1"/>
</dbReference>
<reference key="1">
    <citation type="journal article" date="2009" name="Genome Res.">
        <title>Genome structure of a Saccharomyces cerevisiae strain widely used in bioethanol production.</title>
        <authorList>
            <person name="Argueso J.L."/>
            <person name="Carazzolle M.F."/>
            <person name="Mieczkowski P.A."/>
            <person name="Duarte F.M."/>
            <person name="Netto O.V.C."/>
            <person name="Missawa S.K."/>
            <person name="Galzerani F."/>
            <person name="Costa G.G.L."/>
            <person name="Vidal R.O."/>
            <person name="Noronha M.F."/>
            <person name="Dominska M."/>
            <person name="Andrietta M.G.S."/>
            <person name="Andrietta S.R."/>
            <person name="Cunha A.F."/>
            <person name="Gomes L.H."/>
            <person name="Tavares F.C.A."/>
            <person name="Alcarde A.R."/>
            <person name="Dietrich F.S."/>
            <person name="McCusker J.H."/>
            <person name="Petes T.D."/>
            <person name="Pereira G.A.G."/>
        </authorList>
    </citation>
    <scope>NUCLEOTIDE SEQUENCE [LARGE SCALE GENOMIC DNA]</scope>
    <source>
        <strain>JAY291</strain>
    </source>
</reference>
<name>ASA1_YEAS2</name>
<organism>
    <name type="scientific">Saccharomyces cerevisiae (strain JAY291)</name>
    <name type="common">Baker's yeast</name>
    <dbReference type="NCBI Taxonomy" id="574961"/>
    <lineage>
        <taxon>Eukaryota</taxon>
        <taxon>Fungi</taxon>
        <taxon>Dikarya</taxon>
        <taxon>Ascomycota</taxon>
        <taxon>Saccharomycotina</taxon>
        <taxon>Saccharomycetes</taxon>
        <taxon>Saccharomycetales</taxon>
        <taxon>Saccharomycetaceae</taxon>
        <taxon>Saccharomyces</taxon>
    </lineage>
</organism>
<gene>
    <name type="primary">ASA1</name>
    <name type="ORF">C1Q_02314</name>
</gene>
<feature type="chain" id="PRO_0000402226" description="ASTRA-associated protein 1">
    <location>
        <begin position="1"/>
        <end position="443"/>
    </location>
</feature>
<feature type="repeat" description="WD 1">
    <location>
        <begin position="23"/>
        <end position="67"/>
    </location>
</feature>
<feature type="repeat" description="WD 2">
    <location>
        <begin position="71"/>
        <end position="110"/>
    </location>
</feature>
<feature type="repeat" description="WD 3">
    <location>
        <begin position="258"/>
        <end position="295"/>
    </location>
</feature>
<feature type="repeat" description="WD 4">
    <location>
        <begin position="318"/>
        <end position="359"/>
    </location>
</feature>
<feature type="region of interest" description="Disordered" evidence="2">
    <location>
        <begin position="372"/>
        <end position="391"/>
    </location>
</feature>
<feature type="compositionally biased region" description="Low complexity" evidence="2">
    <location>
        <begin position="378"/>
        <end position="391"/>
    </location>
</feature>
<sequence>MRGFSNEIILKRTLTLSDFTLRYHKRGITALQVIKAPSVSNVPVLLSGDNYGYFVMWDLVTKRPITHMEIEGNSHIIAFWWVETTNVLYILSKDSMLRIFELDSSTQRSIDLVRKLSQANKTDHLQWTKIYEMPINTLNFANFIIEAEVKPTKDNKSYRLVCCHTDDSETIDIYQIIEDSTFKLKRPFNNINFPRFLKQQNFLGISKDSKFGIIMRFAKLNDVIFLGYENGFVVGFKITFDEGLQRDIAELVHVSNDHYPNPILDMCVSGDELYSCSTDDFITKYKIPVNLQLETKYLRDDALLIKCPSSLRVSEPSKVHLPLKNIGHIDKVKDDYLVVSSWSGMTIVYNMRTSEVEQTFVKSKNNLVVSDSSMGDLTNGSGSNTESSSKSHNYKVGAMTCLESFDVQSDGLRLGQLRRIKALAKCNWCLIGYEDGTIKLNKI</sequence>